<reference key="1">
    <citation type="journal article" date="2000" name="DNA Res.">
        <title>Structural analysis of Arabidopsis thaliana chromosome 3. I. Sequence features of the regions of 4,504,864 bp covered by sixty P1 and TAC clones.</title>
        <authorList>
            <person name="Sato S."/>
            <person name="Nakamura Y."/>
            <person name="Kaneko T."/>
            <person name="Katoh T."/>
            <person name="Asamizu E."/>
            <person name="Tabata S."/>
        </authorList>
    </citation>
    <scope>NUCLEOTIDE SEQUENCE [LARGE SCALE GENOMIC DNA]</scope>
    <source>
        <strain>cv. Columbia</strain>
    </source>
</reference>
<reference key="2">
    <citation type="journal article" date="2017" name="Plant J.">
        <title>Araport11: a complete reannotation of the Arabidopsis thaliana reference genome.</title>
        <authorList>
            <person name="Cheng C.Y."/>
            <person name="Krishnakumar V."/>
            <person name="Chan A.P."/>
            <person name="Thibaud-Nissen F."/>
            <person name="Schobel S."/>
            <person name="Town C.D."/>
        </authorList>
    </citation>
    <scope>GENOME REANNOTATION</scope>
    <source>
        <strain>cv. Columbia</strain>
    </source>
</reference>
<reference key="3">
    <citation type="journal article" date="2002" name="Plant Cell">
        <title>A unique short-chain dehydrogenase/reductase in Arabidopsis glucose signaling and abscisic acid biosynthesis and functions.</title>
        <authorList>
            <person name="Cheng W.-H."/>
            <person name="Endo A."/>
            <person name="Zhou L."/>
            <person name="Penney J."/>
            <person name="Chen H.-C."/>
            <person name="Arroyo A."/>
            <person name="Leon P."/>
            <person name="Nambara E."/>
            <person name="Asami T."/>
            <person name="Seo M."/>
            <person name="Koshiba T."/>
            <person name="Sheen J."/>
        </authorList>
    </citation>
    <scope>GENE FAMILY</scope>
    <scope>NOMENCLATURE</scope>
</reference>
<dbReference type="EC" id="1.1.1.-"/>
<dbReference type="EMBL" id="AB026657">
    <property type="protein sequence ID" value="BAB01824.1"/>
    <property type="status" value="ALT_SEQ"/>
    <property type="molecule type" value="Genomic_DNA"/>
</dbReference>
<dbReference type="EMBL" id="CP002686">
    <property type="protein sequence ID" value="AEE77559.1"/>
    <property type="molecule type" value="Genomic_DNA"/>
</dbReference>
<dbReference type="RefSeq" id="NP_189571.1">
    <property type="nucleotide sequence ID" value="NM_113850.1"/>
</dbReference>
<dbReference type="SMR" id="F4J300"/>
<dbReference type="FunCoup" id="F4J300">
    <property type="interactions" value="227"/>
</dbReference>
<dbReference type="STRING" id="3702.F4J300"/>
<dbReference type="PaxDb" id="3702-AT3G29260.1"/>
<dbReference type="ProteomicsDB" id="232670"/>
<dbReference type="EnsemblPlants" id="AT3G29260.1">
    <property type="protein sequence ID" value="AT3G29260.1"/>
    <property type="gene ID" value="AT3G29260"/>
</dbReference>
<dbReference type="GeneID" id="822582"/>
<dbReference type="Gramene" id="AT3G29260.1">
    <property type="protein sequence ID" value="AT3G29260.1"/>
    <property type="gene ID" value="AT3G29260"/>
</dbReference>
<dbReference type="KEGG" id="ath:AT3G29260"/>
<dbReference type="Araport" id="AT3G29260"/>
<dbReference type="TAIR" id="AT3G29260"/>
<dbReference type="eggNOG" id="KOG0725">
    <property type="taxonomic scope" value="Eukaryota"/>
</dbReference>
<dbReference type="HOGENOM" id="CLU_010194_1_0_1"/>
<dbReference type="InParanoid" id="F4J300"/>
<dbReference type="OMA" id="NAICPFY"/>
<dbReference type="PRO" id="PR:F4J300"/>
<dbReference type="Proteomes" id="UP000006548">
    <property type="component" value="Chromosome 3"/>
</dbReference>
<dbReference type="ExpressionAtlas" id="F4J300">
    <property type="expression patterns" value="baseline and differential"/>
</dbReference>
<dbReference type="GO" id="GO:0016491">
    <property type="term" value="F:oxidoreductase activity"/>
    <property type="evidence" value="ECO:0007669"/>
    <property type="project" value="UniProtKB-KW"/>
</dbReference>
<dbReference type="FunFam" id="3.40.50.720:FF:000084">
    <property type="entry name" value="Short-chain dehydrogenase reductase"/>
    <property type="match status" value="1"/>
</dbReference>
<dbReference type="Gene3D" id="3.40.50.720">
    <property type="entry name" value="NAD(P)-binding Rossmann-like Domain"/>
    <property type="match status" value="1"/>
</dbReference>
<dbReference type="InterPro" id="IPR036291">
    <property type="entry name" value="NAD(P)-bd_dom_sf"/>
</dbReference>
<dbReference type="InterPro" id="IPR002347">
    <property type="entry name" value="SDR_fam"/>
</dbReference>
<dbReference type="PANTHER" id="PTHR42820">
    <property type="entry name" value="SHORT-CHAIN DEHYDROGENASE REDUCTASE"/>
    <property type="match status" value="1"/>
</dbReference>
<dbReference type="PANTHER" id="PTHR42820:SF15">
    <property type="entry name" value="SHORT-CHAIN DEHYDROGENASE REDUCTASE 3A-RELATED"/>
    <property type="match status" value="1"/>
</dbReference>
<dbReference type="Pfam" id="PF13561">
    <property type="entry name" value="adh_short_C2"/>
    <property type="match status" value="1"/>
</dbReference>
<dbReference type="PRINTS" id="PR00081">
    <property type="entry name" value="GDHRDH"/>
</dbReference>
<dbReference type="PRINTS" id="PR00080">
    <property type="entry name" value="SDRFAMILY"/>
</dbReference>
<dbReference type="SMART" id="SM00822">
    <property type="entry name" value="PKS_KR"/>
    <property type="match status" value="1"/>
</dbReference>
<dbReference type="SUPFAM" id="SSF51735">
    <property type="entry name" value="NAD(P)-binding Rossmann-fold domains"/>
    <property type="match status" value="1"/>
</dbReference>
<keyword id="KW-0560">Oxidoreductase</keyword>
<keyword id="KW-1185">Reference proteome</keyword>
<accession>F4J300</accession>
<accession>Q9LS67</accession>
<organism>
    <name type="scientific">Arabidopsis thaliana</name>
    <name type="common">Mouse-ear cress</name>
    <dbReference type="NCBI Taxonomy" id="3702"/>
    <lineage>
        <taxon>Eukaryota</taxon>
        <taxon>Viridiplantae</taxon>
        <taxon>Streptophyta</taxon>
        <taxon>Embryophyta</taxon>
        <taxon>Tracheophyta</taxon>
        <taxon>Spermatophyta</taxon>
        <taxon>Magnoliopsida</taxon>
        <taxon>eudicotyledons</taxon>
        <taxon>Gunneridae</taxon>
        <taxon>Pentapetalae</taxon>
        <taxon>rosids</taxon>
        <taxon>malvids</taxon>
        <taxon>Brassicales</taxon>
        <taxon>Brassicaceae</taxon>
        <taxon>Camelineae</taxon>
        <taxon>Arabidopsis</taxon>
    </lineage>
</organism>
<proteinExistence type="inferred from homology"/>
<protein>
    <recommendedName>
        <fullName>Short-chain dehydrogenase reductase 5</fullName>
        <shortName>AtSDR5</shortName>
        <ecNumber>1.1.1.-</ecNumber>
    </recommendedName>
</protein>
<feature type="chain" id="PRO_0000419515" description="Short-chain dehydrogenase reductase 5">
    <location>
        <begin position="1"/>
        <end position="259"/>
    </location>
</feature>
<feature type="active site" description="Proton acceptor" evidence="1">
    <location>
        <position position="157"/>
    </location>
</feature>
<feature type="binding site" evidence="1">
    <location>
        <begin position="12"/>
        <end position="36"/>
    </location>
    <ligand>
        <name>NAD(+)</name>
        <dbReference type="ChEBI" id="CHEBI:57540"/>
    </ligand>
</feature>
<feature type="binding site" evidence="1">
    <location>
        <position position="144"/>
    </location>
    <ligand>
        <name>substrate</name>
    </ligand>
</feature>
<comment type="similarity">
    <text evidence="2">Belongs to the short-chain dehydrogenases/reductases (SDR) family.</text>
</comment>
<comment type="sequence caution" evidence="2">
    <conflict type="erroneous gene model prediction">
        <sequence resource="EMBL-CDS" id="BAB01824"/>
    </conflict>
</comment>
<gene>
    <name type="primary">SDR5</name>
    <name type="ordered locus">At3g29260</name>
    <name type="ORF">MXO21.13</name>
</gene>
<sequence length="259" mass="26925">MSGQRLDGKIVIITGGASGIGAEAARLFTDHGAKVVIVDLQEELGQNVAVSIGLDKASFYRCDITDETEVENAVKFTVEKHGKLDVLFSNAGVMEPHGSILDLDLEAFDRTMAVNVRGAAAFIKHAARSMVASGTRGSIVCTTSVTAEIGGPGPHSYTASKHALLGLVRSACGGLGKYGIRVNGVAPYGVATGLTSYNEETVKMVEDYCSATAILKGVVLKARHVADAALFLASDDSVYISGQNLGVDGGYSVVKLTSN</sequence>
<name>SDR5_ARATH</name>
<evidence type="ECO:0000250" key="1"/>
<evidence type="ECO:0000305" key="2"/>